<evidence type="ECO:0000255" key="1">
    <source>
        <dbReference type="HAMAP-Rule" id="MF_00484"/>
    </source>
</evidence>
<proteinExistence type="inferred from homology"/>
<accession>B2VJU7</accession>
<reference key="1">
    <citation type="journal article" date="2008" name="Environ. Microbiol.">
        <title>The genome of Erwinia tasmaniensis strain Et1/99, a non-pathogenic bacterium in the genus Erwinia.</title>
        <authorList>
            <person name="Kube M."/>
            <person name="Migdoll A.M."/>
            <person name="Mueller I."/>
            <person name="Kuhl H."/>
            <person name="Beck A."/>
            <person name="Reinhardt R."/>
            <person name="Geider K."/>
        </authorList>
    </citation>
    <scope>NUCLEOTIDE SEQUENCE [LARGE SCALE GENOMIC DNA]</scope>
    <source>
        <strain>DSM 17950 / CFBP 7177 / CIP 109463 / NCPPB 4357 / Et1/99</strain>
    </source>
</reference>
<organism>
    <name type="scientific">Erwinia tasmaniensis (strain DSM 17950 / CFBP 7177 / CIP 109463 / NCPPB 4357 / Et1/99)</name>
    <dbReference type="NCBI Taxonomy" id="465817"/>
    <lineage>
        <taxon>Bacteria</taxon>
        <taxon>Pseudomonadati</taxon>
        <taxon>Pseudomonadota</taxon>
        <taxon>Gammaproteobacteria</taxon>
        <taxon>Enterobacterales</taxon>
        <taxon>Erwiniaceae</taxon>
        <taxon>Erwinia</taxon>
    </lineage>
</organism>
<comment type="function">
    <text evidence="1">Synthesizes alpha-1,4-glucan chains using ADP-glucose.</text>
</comment>
<comment type="catalytic activity">
    <reaction evidence="1">
        <text>[(1-&gt;4)-alpha-D-glucosyl](n) + ADP-alpha-D-glucose = [(1-&gt;4)-alpha-D-glucosyl](n+1) + ADP + H(+)</text>
        <dbReference type="Rhea" id="RHEA:18189"/>
        <dbReference type="Rhea" id="RHEA-COMP:9584"/>
        <dbReference type="Rhea" id="RHEA-COMP:9587"/>
        <dbReference type="ChEBI" id="CHEBI:15378"/>
        <dbReference type="ChEBI" id="CHEBI:15444"/>
        <dbReference type="ChEBI" id="CHEBI:57498"/>
        <dbReference type="ChEBI" id="CHEBI:456216"/>
        <dbReference type="EC" id="2.4.1.21"/>
    </reaction>
</comment>
<comment type="pathway">
    <text evidence="1">Glycan biosynthesis; glycogen biosynthesis.</text>
</comment>
<comment type="similarity">
    <text evidence="1">Belongs to the glycosyltransferase 1 family. Bacterial/plant glycogen synthase subfamily.</text>
</comment>
<protein>
    <recommendedName>
        <fullName evidence="1">Glycogen synthase</fullName>
        <ecNumber evidence="1">2.4.1.21</ecNumber>
    </recommendedName>
    <alternativeName>
        <fullName evidence="1">Starch [bacterial glycogen] synthase</fullName>
    </alternativeName>
</protein>
<gene>
    <name evidence="1" type="primary">glgA</name>
    <name type="ordered locus">ETA_32460</name>
</gene>
<name>GLGA_ERWT9</name>
<feature type="chain" id="PRO_1000126074" description="Glycogen synthase">
    <location>
        <begin position="1"/>
        <end position="477"/>
    </location>
</feature>
<feature type="binding site" evidence="1">
    <location>
        <position position="15"/>
    </location>
    <ligand>
        <name>ADP-alpha-D-glucose</name>
        <dbReference type="ChEBI" id="CHEBI:57498"/>
    </ligand>
</feature>
<dbReference type="EC" id="2.4.1.21" evidence="1"/>
<dbReference type="EMBL" id="CU468135">
    <property type="protein sequence ID" value="CAO98292.1"/>
    <property type="molecule type" value="Genomic_DNA"/>
</dbReference>
<dbReference type="RefSeq" id="WP_012442919.1">
    <property type="nucleotide sequence ID" value="NC_010694.1"/>
</dbReference>
<dbReference type="SMR" id="B2VJU7"/>
<dbReference type="STRING" id="465817.ETA_32460"/>
<dbReference type="CAZy" id="GT5">
    <property type="family name" value="Glycosyltransferase Family 5"/>
</dbReference>
<dbReference type="KEGG" id="eta:ETA_32460"/>
<dbReference type="eggNOG" id="COG0297">
    <property type="taxonomic scope" value="Bacteria"/>
</dbReference>
<dbReference type="HOGENOM" id="CLU_009583_18_4_6"/>
<dbReference type="OrthoDB" id="9808590at2"/>
<dbReference type="UniPathway" id="UPA00164"/>
<dbReference type="Proteomes" id="UP000001726">
    <property type="component" value="Chromosome"/>
</dbReference>
<dbReference type="GO" id="GO:0005829">
    <property type="term" value="C:cytosol"/>
    <property type="evidence" value="ECO:0007669"/>
    <property type="project" value="TreeGrafter"/>
</dbReference>
<dbReference type="GO" id="GO:0009011">
    <property type="term" value="F:alpha-1,4-glucan glucosyltransferase (ADP-glucose donor) activity"/>
    <property type="evidence" value="ECO:0007669"/>
    <property type="project" value="UniProtKB-UniRule"/>
</dbReference>
<dbReference type="GO" id="GO:0004373">
    <property type="term" value="F:alpha-1,4-glucan glucosyltransferase (UDP-glucose donor) activity"/>
    <property type="evidence" value="ECO:0007669"/>
    <property type="project" value="InterPro"/>
</dbReference>
<dbReference type="GO" id="GO:0005978">
    <property type="term" value="P:glycogen biosynthetic process"/>
    <property type="evidence" value="ECO:0007669"/>
    <property type="project" value="UniProtKB-UniRule"/>
</dbReference>
<dbReference type="CDD" id="cd03791">
    <property type="entry name" value="GT5_Glycogen_synthase_DULL1-like"/>
    <property type="match status" value="1"/>
</dbReference>
<dbReference type="FunFam" id="3.40.50.2000:FF:000011">
    <property type="entry name" value="Glycogen synthase"/>
    <property type="match status" value="1"/>
</dbReference>
<dbReference type="Gene3D" id="3.40.50.2000">
    <property type="entry name" value="Glycogen Phosphorylase B"/>
    <property type="match status" value="2"/>
</dbReference>
<dbReference type="HAMAP" id="MF_00484">
    <property type="entry name" value="Glycogen_synth"/>
    <property type="match status" value="1"/>
</dbReference>
<dbReference type="InterPro" id="IPR001296">
    <property type="entry name" value="Glyco_trans_1"/>
</dbReference>
<dbReference type="InterPro" id="IPR011835">
    <property type="entry name" value="GS/SS"/>
</dbReference>
<dbReference type="InterPro" id="IPR013534">
    <property type="entry name" value="Starch_synth_cat_dom"/>
</dbReference>
<dbReference type="NCBIfam" id="TIGR02095">
    <property type="entry name" value="glgA"/>
    <property type="match status" value="1"/>
</dbReference>
<dbReference type="NCBIfam" id="NF001899">
    <property type="entry name" value="PRK00654.1-2"/>
    <property type="match status" value="1"/>
</dbReference>
<dbReference type="PANTHER" id="PTHR45825:SF11">
    <property type="entry name" value="ALPHA AMYLASE DOMAIN-CONTAINING PROTEIN"/>
    <property type="match status" value="1"/>
</dbReference>
<dbReference type="PANTHER" id="PTHR45825">
    <property type="entry name" value="GRANULE-BOUND STARCH SYNTHASE 1, CHLOROPLASTIC/AMYLOPLASTIC"/>
    <property type="match status" value="1"/>
</dbReference>
<dbReference type="Pfam" id="PF08323">
    <property type="entry name" value="Glyco_transf_5"/>
    <property type="match status" value="1"/>
</dbReference>
<dbReference type="Pfam" id="PF00534">
    <property type="entry name" value="Glycos_transf_1"/>
    <property type="match status" value="1"/>
</dbReference>
<dbReference type="SUPFAM" id="SSF53756">
    <property type="entry name" value="UDP-Glycosyltransferase/glycogen phosphorylase"/>
    <property type="match status" value="1"/>
</dbReference>
<sequence length="477" mass="52719">MQVLHVCSELFPLLKTGGLADVVGALPAAQIAAGDDTRVLLPAFPDLKKGITQIQVVAQLQTFAGYVELHFGHFNGVGIYLIDAPGLYDRPGSPYHDESQYAYSDNYLRFALLGWVSCELACGLDPWWRPEVVHAHDWHAGLSCAYLAARGRPAKSVFTVHNLAYQGLFNARHMEQIQLPHSFFDVYGMEFHGQISYLKAGLFYADHVTAVSPTYAREITQPEFGYGMEGLLKQRLLEGRLSGILNGVDPAIWNPAHDLLLAARYNRDVLDAKRENKRQLQIAMGLKIDEKAPIFAVVSRLTKQKGLDLVLEALPGLLEQGGQLVVLGAGDAELQQGFLAAAAENPGQVGVQIGYHEAFSHRIMGGADVILVPSRFEPCGLTQLYALKYGTLPLVRRTGGLADTVNDCSLENLADGIASGFSFEDSNAWSLLRAIRRSFVLWSRPSLWRYVQRQAMGMDFSWQVAAVAYRDLYQRLL</sequence>
<keyword id="KW-0320">Glycogen biosynthesis</keyword>
<keyword id="KW-0328">Glycosyltransferase</keyword>
<keyword id="KW-1185">Reference proteome</keyword>
<keyword id="KW-0808">Transferase</keyword>